<comment type="function">
    <text evidence="1">One of the primary rRNA binding proteins. Required for association of the 30S and 50S subunits to form the 70S ribosome, for tRNA binding and peptide bond formation. It has been suggested to have peptidyltransferase activity; this is somewhat controversial. Makes several contacts with the 16S rRNA in the 70S ribosome.</text>
</comment>
<comment type="subunit">
    <text evidence="1">Part of the 50S ribosomal subunit. Forms a bridge to the 30S subunit in the 70S ribosome.</text>
</comment>
<comment type="similarity">
    <text evidence="1">Belongs to the universal ribosomal protein uL2 family.</text>
</comment>
<feature type="chain" id="PRO_1000086326" description="Large ribosomal subunit protein uL2">
    <location>
        <begin position="1"/>
        <end position="277"/>
    </location>
</feature>
<feature type="region of interest" description="Disordered" evidence="2">
    <location>
        <begin position="222"/>
        <end position="277"/>
    </location>
</feature>
<gene>
    <name evidence="1" type="primary">rplB</name>
    <name type="ordered locus">CKL_0227</name>
</gene>
<sequence>MAVKGFKPTTPSRRHMTVNTFEEITTDIPEKSLLVALKRSGGRNAHGKITVRHIGGGAKRKYRIIDFKRNKDGIPAKVSTIEYDPNRSAFIALVTYADGEKRYIIAPVGLKVGDVIVSGADSDIKVGNCLPIVNIPVGTTIHNIELQAGKGAQLVRSAGTSAQLMAKEGKYATLRLPSGEVRYVRIECRATIGTVSNLTHEIINIGKAGRKRHMGIRPTVRGSVMNPNDHPHGGGEGKSPVGHPGPLTPWGKPALGLKTRKNKKYSDKFIIKRKNKK</sequence>
<accession>A5N4Q0</accession>
<dbReference type="EMBL" id="CP000673">
    <property type="protein sequence ID" value="EDK32281.1"/>
    <property type="molecule type" value="Genomic_DNA"/>
</dbReference>
<dbReference type="RefSeq" id="WP_011988806.1">
    <property type="nucleotide sequence ID" value="NC_009706.1"/>
</dbReference>
<dbReference type="SMR" id="A5N4Q0"/>
<dbReference type="STRING" id="431943.CKL_0227"/>
<dbReference type="KEGG" id="ckl:CKL_0227"/>
<dbReference type="eggNOG" id="COG0090">
    <property type="taxonomic scope" value="Bacteria"/>
</dbReference>
<dbReference type="HOGENOM" id="CLU_036235_2_1_9"/>
<dbReference type="Proteomes" id="UP000002411">
    <property type="component" value="Chromosome"/>
</dbReference>
<dbReference type="GO" id="GO:0015934">
    <property type="term" value="C:large ribosomal subunit"/>
    <property type="evidence" value="ECO:0007669"/>
    <property type="project" value="InterPro"/>
</dbReference>
<dbReference type="GO" id="GO:0019843">
    <property type="term" value="F:rRNA binding"/>
    <property type="evidence" value="ECO:0007669"/>
    <property type="project" value="UniProtKB-UniRule"/>
</dbReference>
<dbReference type="GO" id="GO:0003735">
    <property type="term" value="F:structural constituent of ribosome"/>
    <property type="evidence" value="ECO:0007669"/>
    <property type="project" value="InterPro"/>
</dbReference>
<dbReference type="GO" id="GO:0016740">
    <property type="term" value="F:transferase activity"/>
    <property type="evidence" value="ECO:0007669"/>
    <property type="project" value="InterPro"/>
</dbReference>
<dbReference type="GO" id="GO:0002181">
    <property type="term" value="P:cytoplasmic translation"/>
    <property type="evidence" value="ECO:0007669"/>
    <property type="project" value="TreeGrafter"/>
</dbReference>
<dbReference type="FunFam" id="2.30.30.30:FF:000001">
    <property type="entry name" value="50S ribosomal protein L2"/>
    <property type="match status" value="1"/>
</dbReference>
<dbReference type="FunFam" id="2.40.50.140:FF:000003">
    <property type="entry name" value="50S ribosomal protein L2"/>
    <property type="match status" value="1"/>
</dbReference>
<dbReference type="FunFam" id="4.10.950.10:FF:000001">
    <property type="entry name" value="50S ribosomal protein L2"/>
    <property type="match status" value="1"/>
</dbReference>
<dbReference type="Gene3D" id="2.30.30.30">
    <property type="match status" value="1"/>
</dbReference>
<dbReference type="Gene3D" id="2.40.50.140">
    <property type="entry name" value="Nucleic acid-binding proteins"/>
    <property type="match status" value="1"/>
</dbReference>
<dbReference type="Gene3D" id="4.10.950.10">
    <property type="entry name" value="Ribosomal protein L2, domain 3"/>
    <property type="match status" value="1"/>
</dbReference>
<dbReference type="HAMAP" id="MF_01320_B">
    <property type="entry name" value="Ribosomal_uL2_B"/>
    <property type="match status" value="1"/>
</dbReference>
<dbReference type="InterPro" id="IPR012340">
    <property type="entry name" value="NA-bd_OB-fold"/>
</dbReference>
<dbReference type="InterPro" id="IPR014722">
    <property type="entry name" value="Rib_uL2_dom2"/>
</dbReference>
<dbReference type="InterPro" id="IPR002171">
    <property type="entry name" value="Ribosomal_uL2"/>
</dbReference>
<dbReference type="InterPro" id="IPR005880">
    <property type="entry name" value="Ribosomal_uL2_bac/org-type"/>
</dbReference>
<dbReference type="InterPro" id="IPR022669">
    <property type="entry name" value="Ribosomal_uL2_C"/>
</dbReference>
<dbReference type="InterPro" id="IPR022671">
    <property type="entry name" value="Ribosomal_uL2_CS"/>
</dbReference>
<dbReference type="InterPro" id="IPR014726">
    <property type="entry name" value="Ribosomal_uL2_dom3"/>
</dbReference>
<dbReference type="InterPro" id="IPR022666">
    <property type="entry name" value="Ribosomal_uL2_RNA-bd_dom"/>
</dbReference>
<dbReference type="InterPro" id="IPR008991">
    <property type="entry name" value="Translation_prot_SH3-like_sf"/>
</dbReference>
<dbReference type="NCBIfam" id="TIGR01171">
    <property type="entry name" value="rplB_bact"/>
    <property type="match status" value="1"/>
</dbReference>
<dbReference type="PANTHER" id="PTHR13691:SF5">
    <property type="entry name" value="LARGE RIBOSOMAL SUBUNIT PROTEIN UL2M"/>
    <property type="match status" value="1"/>
</dbReference>
<dbReference type="PANTHER" id="PTHR13691">
    <property type="entry name" value="RIBOSOMAL PROTEIN L2"/>
    <property type="match status" value="1"/>
</dbReference>
<dbReference type="Pfam" id="PF00181">
    <property type="entry name" value="Ribosomal_L2"/>
    <property type="match status" value="1"/>
</dbReference>
<dbReference type="Pfam" id="PF03947">
    <property type="entry name" value="Ribosomal_L2_C"/>
    <property type="match status" value="1"/>
</dbReference>
<dbReference type="PIRSF" id="PIRSF002158">
    <property type="entry name" value="Ribosomal_L2"/>
    <property type="match status" value="1"/>
</dbReference>
<dbReference type="SMART" id="SM01383">
    <property type="entry name" value="Ribosomal_L2"/>
    <property type="match status" value="1"/>
</dbReference>
<dbReference type="SMART" id="SM01382">
    <property type="entry name" value="Ribosomal_L2_C"/>
    <property type="match status" value="1"/>
</dbReference>
<dbReference type="SUPFAM" id="SSF50249">
    <property type="entry name" value="Nucleic acid-binding proteins"/>
    <property type="match status" value="1"/>
</dbReference>
<dbReference type="SUPFAM" id="SSF50104">
    <property type="entry name" value="Translation proteins SH3-like domain"/>
    <property type="match status" value="1"/>
</dbReference>
<dbReference type="PROSITE" id="PS00467">
    <property type="entry name" value="RIBOSOMAL_L2"/>
    <property type="match status" value="1"/>
</dbReference>
<protein>
    <recommendedName>
        <fullName evidence="1">Large ribosomal subunit protein uL2</fullName>
    </recommendedName>
    <alternativeName>
        <fullName evidence="3">50S ribosomal protein L2</fullName>
    </alternativeName>
</protein>
<name>RL2_CLOK5</name>
<reference key="1">
    <citation type="journal article" date="2008" name="Proc. Natl. Acad. Sci. U.S.A.">
        <title>The genome of Clostridium kluyveri, a strict anaerobe with unique metabolic features.</title>
        <authorList>
            <person name="Seedorf H."/>
            <person name="Fricke W.F."/>
            <person name="Veith B."/>
            <person name="Brueggemann H."/>
            <person name="Liesegang H."/>
            <person name="Strittmatter A."/>
            <person name="Miethke M."/>
            <person name="Buckel W."/>
            <person name="Hinderberger J."/>
            <person name="Li F."/>
            <person name="Hagemeier C."/>
            <person name="Thauer R.K."/>
            <person name="Gottschalk G."/>
        </authorList>
    </citation>
    <scope>NUCLEOTIDE SEQUENCE [LARGE SCALE GENOMIC DNA]</scope>
    <source>
        <strain>ATCC 8527 / DSM 555 / NBRC 12016 / NCIMB 10680 / K1</strain>
    </source>
</reference>
<organism>
    <name type="scientific">Clostridium kluyveri (strain ATCC 8527 / DSM 555 / NBRC 12016 / NCIMB 10680 / K1)</name>
    <dbReference type="NCBI Taxonomy" id="431943"/>
    <lineage>
        <taxon>Bacteria</taxon>
        <taxon>Bacillati</taxon>
        <taxon>Bacillota</taxon>
        <taxon>Clostridia</taxon>
        <taxon>Eubacteriales</taxon>
        <taxon>Clostridiaceae</taxon>
        <taxon>Clostridium</taxon>
    </lineage>
</organism>
<proteinExistence type="inferred from homology"/>
<keyword id="KW-1185">Reference proteome</keyword>
<keyword id="KW-0687">Ribonucleoprotein</keyword>
<keyword id="KW-0689">Ribosomal protein</keyword>
<keyword id="KW-0694">RNA-binding</keyword>
<keyword id="KW-0699">rRNA-binding</keyword>
<evidence type="ECO:0000255" key="1">
    <source>
        <dbReference type="HAMAP-Rule" id="MF_01320"/>
    </source>
</evidence>
<evidence type="ECO:0000256" key="2">
    <source>
        <dbReference type="SAM" id="MobiDB-lite"/>
    </source>
</evidence>
<evidence type="ECO:0000305" key="3"/>